<organism>
    <name type="scientific">Macrobrachium malcolmsonii</name>
    <name type="common">Monsoon river-prawn</name>
    <name type="synonym">Palaemon malcolmsonii</name>
    <dbReference type="NCBI Taxonomy" id="6697"/>
    <lineage>
        <taxon>Eukaryota</taxon>
        <taxon>Metazoa</taxon>
        <taxon>Ecdysozoa</taxon>
        <taxon>Arthropoda</taxon>
        <taxon>Crustacea</taxon>
        <taxon>Multicrustacea</taxon>
        <taxon>Malacostraca</taxon>
        <taxon>Eumalacostraca</taxon>
        <taxon>Eucarida</taxon>
        <taxon>Decapoda</taxon>
        <taxon>Pleocyemata</taxon>
        <taxon>Caridea</taxon>
        <taxon>Palaemonoidea</taxon>
        <taxon>Palaemonidae</taxon>
        <taxon>Macrobrachium</taxon>
    </lineage>
</organism>
<sequence>MGDVEKGKKIFVQRCAQCHSAQANLKHKTGPNLNGLFGRQTGQASGYVYTDANKAKGITWQADTLDVYLENPKKYIPGTKMVFAGLKKANERADLIAYLKQATNL</sequence>
<reference key="1">
    <citation type="journal article" date="1976" name="Comp. Biochem. Physiol.">
        <title>A comparison of cytochrome c from Macrobrachium malcomsonii with other invertebrate cytochromes c.</title>
        <authorList>
            <person name="Lyddiatt A."/>
            <person name="Boulter D."/>
        </authorList>
    </citation>
    <scope>PROTEIN SEQUENCE OF 2-105</scope>
</reference>
<dbReference type="PIR" id="A00028">
    <property type="entry name" value="CCMM"/>
</dbReference>
<dbReference type="SMR" id="P00031"/>
<dbReference type="GO" id="GO:0005758">
    <property type="term" value="C:mitochondrial intermembrane space"/>
    <property type="evidence" value="ECO:0007669"/>
    <property type="project" value="UniProtKB-SubCell"/>
</dbReference>
<dbReference type="GO" id="GO:0009055">
    <property type="term" value="F:electron transfer activity"/>
    <property type="evidence" value="ECO:0007669"/>
    <property type="project" value="InterPro"/>
</dbReference>
<dbReference type="GO" id="GO:0020037">
    <property type="term" value="F:heme binding"/>
    <property type="evidence" value="ECO:0007669"/>
    <property type="project" value="InterPro"/>
</dbReference>
<dbReference type="GO" id="GO:0046872">
    <property type="term" value="F:metal ion binding"/>
    <property type="evidence" value="ECO:0007669"/>
    <property type="project" value="UniProtKB-KW"/>
</dbReference>
<dbReference type="FunFam" id="1.10.760.10:FF:000001">
    <property type="entry name" value="Cytochrome c iso-1"/>
    <property type="match status" value="1"/>
</dbReference>
<dbReference type="Gene3D" id="1.10.760.10">
    <property type="entry name" value="Cytochrome c-like domain"/>
    <property type="match status" value="1"/>
</dbReference>
<dbReference type="InterPro" id="IPR009056">
    <property type="entry name" value="Cyt_c-like_dom"/>
</dbReference>
<dbReference type="InterPro" id="IPR036909">
    <property type="entry name" value="Cyt_c-like_dom_sf"/>
</dbReference>
<dbReference type="InterPro" id="IPR002327">
    <property type="entry name" value="Cyt_c_1A/1B"/>
</dbReference>
<dbReference type="PANTHER" id="PTHR11961">
    <property type="entry name" value="CYTOCHROME C"/>
    <property type="match status" value="1"/>
</dbReference>
<dbReference type="Pfam" id="PF00034">
    <property type="entry name" value="Cytochrom_C"/>
    <property type="match status" value="1"/>
</dbReference>
<dbReference type="PRINTS" id="PR00604">
    <property type="entry name" value="CYTCHRMECIAB"/>
</dbReference>
<dbReference type="SUPFAM" id="SSF46626">
    <property type="entry name" value="Cytochrome c"/>
    <property type="match status" value="1"/>
</dbReference>
<dbReference type="PROSITE" id="PS51007">
    <property type="entry name" value="CYTC"/>
    <property type="match status" value="1"/>
</dbReference>
<protein>
    <recommendedName>
        <fullName>Cytochrome c</fullName>
    </recommendedName>
</protein>
<feature type="initiator methionine" description="Removed" evidence="1">
    <location>
        <position position="1"/>
    </location>
</feature>
<feature type="chain" id="PRO_0000108277" description="Cytochrome c">
    <location>
        <begin position="2"/>
        <end position="105"/>
    </location>
</feature>
<feature type="binding site" description="covalent">
    <location>
        <position position="15"/>
    </location>
    <ligand>
        <name>heme c</name>
        <dbReference type="ChEBI" id="CHEBI:61717"/>
    </ligand>
</feature>
<feature type="binding site" description="covalent">
    <location>
        <position position="18"/>
    </location>
    <ligand>
        <name>heme c</name>
        <dbReference type="ChEBI" id="CHEBI:61717"/>
    </ligand>
</feature>
<feature type="binding site" description="axial binding residue">
    <location>
        <position position="19"/>
    </location>
    <ligand>
        <name>heme c</name>
        <dbReference type="ChEBI" id="CHEBI:61717"/>
    </ligand>
    <ligandPart>
        <name>Fe</name>
        <dbReference type="ChEBI" id="CHEBI:18248"/>
    </ligandPart>
</feature>
<feature type="binding site" description="axial binding residue">
    <location>
        <position position="81"/>
    </location>
    <ligand>
        <name>heme c</name>
        <dbReference type="ChEBI" id="CHEBI:61717"/>
    </ligand>
    <ligandPart>
        <name>Fe</name>
        <dbReference type="ChEBI" id="CHEBI:18248"/>
    </ligandPart>
</feature>
<feature type="modified residue" description="Blocked amino end (Gly)" evidence="1">
    <location>
        <position position="2"/>
    </location>
</feature>
<accession>P00031</accession>
<proteinExistence type="evidence at protein level"/>
<evidence type="ECO:0000269" key="1">
    <source>
    </source>
</evidence>
<evidence type="ECO:0000305" key="2"/>
<comment type="function">
    <text>Electron carrier protein. The oxidized form of the cytochrome c heme group can accept an electron from the heme group of the cytochrome c1 subunit of cytochrome reductase. Cytochrome c then transfers this electron to the cytochrome oxidase complex, the final protein carrier in the mitochondrial electron-transport chain.</text>
</comment>
<comment type="subcellular location">
    <subcellularLocation>
        <location>Mitochondrion intermembrane space</location>
    </subcellularLocation>
    <text>Loosely associated with the inner membrane.</text>
</comment>
<comment type="PTM">
    <text>Binds 1 heme c group covalently per subunit.</text>
</comment>
<comment type="similarity">
    <text evidence="2">Belongs to the cytochrome c family.</text>
</comment>
<comment type="online information" name="Protein Spotlight">
    <link uri="https://www.proteinspotlight.org/back_issues/076"/>
    <text>Life shuttle - Issue 76 of November 2006</text>
</comment>
<name>CYC_MACMA</name>
<keyword id="KW-0903">Direct protein sequencing</keyword>
<keyword id="KW-0249">Electron transport</keyword>
<keyword id="KW-0349">Heme</keyword>
<keyword id="KW-0408">Iron</keyword>
<keyword id="KW-0479">Metal-binding</keyword>
<keyword id="KW-0496">Mitochondrion</keyword>
<keyword id="KW-0679">Respiratory chain</keyword>
<keyword id="KW-0813">Transport</keyword>